<feature type="chain" id="PRO_0000427425" description="Uncharacterized protein MT1749">
    <location>
        <begin position="1"/>
        <end position="318"/>
    </location>
</feature>
<feature type="region of interest" description="Disordered" evidence="3">
    <location>
        <begin position="19"/>
        <end position="63"/>
    </location>
</feature>
<feature type="compositionally biased region" description="Basic and acidic residues" evidence="3">
    <location>
        <begin position="21"/>
        <end position="37"/>
    </location>
</feature>
<feature type="binding site" evidence="2">
    <location>
        <begin position="72"/>
        <end position="79"/>
    </location>
    <ligand>
        <name>ATP</name>
        <dbReference type="ChEBI" id="CHEBI:30616"/>
    </ligand>
</feature>
<evidence type="ECO:0000250" key="1"/>
<evidence type="ECO:0000255" key="2"/>
<evidence type="ECO:0000256" key="3">
    <source>
        <dbReference type="SAM" id="MobiDB-lite"/>
    </source>
</evidence>
<evidence type="ECO:0000305" key="4"/>
<comment type="function">
    <text evidence="1">May play a role in septum formation.</text>
</comment>
<comment type="similarity">
    <text evidence="4">Belongs to the ParA family.</text>
</comment>
<comment type="sequence caution" evidence="4">
    <conflict type="erroneous initiation">
        <sequence resource="EMBL-CDS" id="AAK46019"/>
    </conflict>
</comment>
<dbReference type="EMBL" id="AE000516">
    <property type="protein sequence ID" value="AAK46019.1"/>
    <property type="status" value="ALT_INIT"/>
    <property type="molecule type" value="Genomic_DNA"/>
</dbReference>
<dbReference type="PIR" id="C70504">
    <property type="entry name" value="C70504"/>
</dbReference>
<dbReference type="SMR" id="P9WLT0"/>
<dbReference type="KEGG" id="mtc:MT1749"/>
<dbReference type="PATRIC" id="fig|83331.31.peg.1877"/>
<dbReference type="HOGENOM" id="CLU_037612_1_4_11"/>
<dbReference type="Proteomes" id="UP000001020">
    <property type="component" value="Chromosome"/>
</dbReference>
<dbReference type="GO" id="GO:0005524">
    <property type="term" value="F:ATP binding"/>
    <property type="evidence" value="ECO:0007669"/>
    <property type="project" value="UniProtKB-KW"/>
</dbReference>
<dbReference type="CDD" id="cd02042">
    <property type="entry name" value="ParAB_family"/>
    <property type="match status" value="1"/>
</dbReference>
<dbReference type="FunFam" id="3.40.50.300:FF:000285">
    <property type="entry name" value="Sporulation initiation inhibitor Soj"/>
    <property type="match status" value="1"/>
</dbReference>
<dbReference type="Gene3D" id="3.40.50.300">
    <property type="entry name" value="P-loop containing nucleotide triphosphate hydrolases"/>
    <property type="match status" value="1"/>
</dbReference>
<dbReference type="InterPro" id="IPR025669">
    <property type="entry name" value="AAA_dom"/>
</dbReference>
<dbReference type="InterPro" id="IPR050678">
    <property type="entry name" value="DNA_Partitioning_ATPase"/>
</dbReference>
<dbReference type="InterPro" id="IPR027417">
    <property type="entry name" value="P-loop_NTPase"/>
</dbReference>
<dbReference type="PANTHER" id="PTHR13696:SF99">
    <property type="entry name" value="COBYRINIC ACID AC-DIAMIDE SYNTHASE"/>
    <property type="match status" value="1"/>
</dbReference>
<dbReference type="PANTHER" id="PTHR13696">
    <property type="entry name" value="P-LOOP CONTAINING NUCLEOSIDE TRIPHOSPHATE HYDROLASE"/>
    <property type="match status" value="1"/>
</dbReference>
<dbReference type="Pfam" id="PF13614">
    <property type="entry name" value="AAA_31"/>
    <property type="match status" value="1"/>
</dbReference>
<dbReference type="SUPFAM" id="SSF52540">
    <property type="entry name" value="P-loop containing nucleoside triphosphate hydrolases"/>
    <property type="match status" value="1"/>
</dbReference>
<name>Y1708_MYCTO</name>
<proteinExistence type="inferred from homology"/>
<protein>
    <recommendedName>
        <fullName>Uncharacterized protein MT1749</fullName>
    </recommendedName>
</protein>
<organism>
    <name type="scientific">Mycobacterium tuberculosis (strain CDC 1551 / Oshkosh)</name>
    <dbReference type="NCBI Taxonomy" id="83331"/>
    <lineage>
        <taxon>Bacteria</taxon>
        <taxon>Bacillati</taxon>
        <taxon>Actinomycetota</taxon>
        <taxon>Actinomycetes</taxon>
        <taxon>Mycobacteriales</taxon>
        <taxon>Mycobacteriaceae</taxon>
        <taxon>Mycobacterium</taxon>
        <taxon>Mycobacterium tuberculosis complex</taxon>
    </lineage>
</organism>
<gene>
    <name type="ordered locus">MT1749</name>
</gene>
<accession>P9WLT0</accession>
<accession>L0TA63</accession>
<accession>O33207</accession>
<accession>Q7D840</accession>
<keyword id="KW-0067">ATP-binding</keyword>
<keyword id="KW-0547">Nucleotide-binding</keyword>
<keyword id="KW-1185">Reference proteome</keyword>
<reference key="1">
    <citation type="journal article" date="2002" name="J. Bacteriol.">
        <title>Whole-genome comparison of Mycobacterium tuberculosis clinical and laboratory strains.</title>
        <authorList>
            <person name="Fleischmann R.D."/>
            <person name="Alland D."/>
            <person name="Eisen J.A."/>
            <person name="Carpenter L."/>
            <person name="White O."/>
            <person name="Peterson J.D."/>
            <person name="DeBoy R.T."/>
            <person name="Dodson R.J."/>
            <person name="Gwinn M.L."/>
            <person name="Haft D.H."/>
            <person name="Hickey E.K."/>
            <person name="Kolonay J.F."/>
            <person name="Nelson W.C."/>
            <person name="Umayam L.A."/>
            <person name="Ermolaeva M.D."/>
            <person name="Salzberg S.L."/>
            <person name="Delcher A."/>
            <person name="Utterback T.R."/>
            <person name="Weidman J.F."/>
            <person name="Khouri H.M."/>
            <person name="Gill J."/>
            <person name="Mikula A."/>
            <person name="Bishai W."/>
            <person name="Jacobs W.R. Jr."/>
            <person name="Venter J.C."/>
            <person name="Fraser C.M."/>
        </authorList>
    </citation>
    <scope>NUCLEOTIDE SEQUENCE [LARGE SCALE GENOMIC DNA]</scope>
    <source>
        <strain>CDC 1551 / Oshkosh</strain>
    </source>
</reference>
<sequence length="318" mass="34380">MPAGLPGQASVAVRLSCDVPPDARHHEPRPGMTDHPDTGNGIGLTGRPPRAIPDPAPRSSHGPAKVIAMCNQKGGVGKTTSTINLGAALGEYGRRVLLVDMDPQGALSAGLGVPHYELDKTIHNVLVEPRVSIDDVLIHSRVKNMDLVPSNIDLSAAEIQLVNEVGREQTLARALYPVLDRYDYVLIDCQPSLGLLTVNGLACTDGVIIPTECEFFSLRGLALLTDTVDKVRDRLNPKLDISGILITRYDPRTVNSREVMARVVERFGDLVFDTVITRTVRFPETSVAGEPITTWAPKSAGALAYRALARELIDRFGM</sequence>